<dbReference type="EMBL" id="AAFI02000063">
    <property type="protein sequence ID" value="EAL65421.2"/>
    <property type="molecule type" value="Genomic_DNA"/>
</dbReference>
<dbReference type="RefSeq" id="XP_638759.2">
    <property type="nucleotide sequence ID" value="XM_633667.2"/>
</dbReference>
<dbReference type="SMR" id="Q54Q38"/>
<dbReference type="PaxDb" id="44689-DDB0235379"/>
<dbReference type="EnsemblProtists" id="EAL65421">
    <property type="protein sequence ID" value="EAL65421"/>
    <property type="gene ID" value="DDB_G0284161"/>
</dbReference>
<dbReference type="GeneID" id="8624430"/>
<dbReference type="KEGG" id="ddi:DDB_G0284161"/>
<dbReference type="dictyBase" id="DDB_G0284161"/>
<dbReference type="VEuPathDB" id="AmoebaDB:DDB_G0284161"/>
<dbReference type="HOGENOM" id="CLU_2268888_0_0_1"/>
<dbReference type="InParanoid" id="Q54Q38"/>
<dbReference type="PRO" id="PR:Q54Q38"/>
<dbReference type="Proteomes" id="UP000002195">
    <property type="component" value="Chromosome 4"/>
</dbReference>
<sequence length="103" mass="11213">MNRGFSFSTKVATSLNRCNNRSNNISQSVSYNFINKPTTTTSSTTSASTTSQPSFSLPTSCNSNSPQSNLNSFRTKSQTISKFSSNLLGTALFEFQAFLIDDT</sequence>
<reference key="1">
    <citation type="journal article" date="2005" name="Nature">
        <title>The genome of the social amoeba Dictyostelium discoideum.</title>
        <authorList>
            <person name="Eichinger L."/>
            <person name="Pachebat J.A."/>
            <person name="Gloeckner G."/>
            <person name="Rajandream M.A."/>
            <person name="Sucgang R."/>
            <person name="Berriman M."/>
            <person name="Song J."/>
            <person name="Olsen R."/>
            <person name="Szafranski K."/>
            <person name="Xu Q."/>
            <person name="Tunggal B."/>
            <person name="Kummerfeld S."/>
            <person name="Madera M."/>
            <person name="Konfortov B.A."/>
            <person name="Rivero F."/>
            <person name="Bankier A.T."/>
            <person name="Lehmann R."/>
            <person name="Hamlin N."/>
            <person name="Davies R."/>
            <person name="Gaudet P."/>
            <person name="Fey P."/>
            <person name="Pilcher K."/>
            <person name="Chen G."/>
            <person name="Saunders D."/>
            <person name="Sodergren E.J."/>
            <person name="Davis P."/>
            <person name="Kerhornou A."/>
            <person name="Nie X."/>
            <person name="Hall N."/>
            <person name="Anjard C."/>
            <person name="Hemphill L."/>
            <person name="Bason N."/>
            <person name="Farbrother P."/>
            <person name="Desany B."/>
            <person name="Just E."/>
            <person name="Morio T."/>
            <person name="Rost R."/>
            <person name="Churcher C.M."/>
            <person name="Cooper J."/>
            <person name="Haydock S."/>
            <person name="van Driessche N."/>
            <person name="Cronin A."/>
            <person name="Goodhead I."/>
            <person name="Muzny D.M."/>
            <person name="Mourier T."/>
            <person name="Pain A."/>
            <person name="Lu M."/>
            <person name="Harper D."/>
            <person name="Lindsay R."/>
            <person name="Hauser H."/>
            <person name="James K.D."/>
            <person name="Quiles M."/>
            <person name="Madan Babu M."/>
            <person name="Saito T."/>
            <person name="Buchrieser C."/>
            <person name="Wardroper A."/>
            <person name="Felder M."/>
            <person name="Thangavelu M."/>
            <person name="Johnson D."/>
            <person name="Knights A."/>
            <person name="Loulseged H."/>
            <person name="Mungall K.L."/>
            <person name="Oliver K."/>
            <person name="Price C."/>
            <person name="Quail M.A."/>
            <person name="Urushihara H."/>
            <person name="Hernandez J."/>
            <person name="Rabbinowitsch E."/>
            <person name="Steffen D."/>
            <person name="Sanders M."/>
            <person name="Ma J."/>
            <person name="Kohara Y."/>
            <person name="Sharp S."/>
            <person name="Simmonds M.N."/>
            <person name="Spiegler S."/>
            <person name="Tivey A."/>
            <person name="Sugano S."/>
            <person name="White B."/>
            <person name="Walker D."/>
            <person name="Woodward J.R."/>
            <person name="Winckler T."/>
            <person name="Tanaka Y."/>
            <person name="Shaulsky G."/>
            <person name="Schleicher M."/>
            <person name="Weinstock G.M."/>
            <person name="Rosenthal A."/>
            <person name="Cox E.C."/>
            <person name="Chisholm R.L."/>
            <person name="Gibbs R.A."/>
            <person name="Loomis W.F."/>
            <person name="Platzer M."/>
            <person name="Kay R.R."/>
            <person name="Williams J.G."/>
            <person name="Dear P.H."/>
            <person name="Noegel A.A."/>
            <person name="Barrell B.G."/>
            <person name="Kuspa A."/>
        </authorList>
    </citation>
    <scope>NUCLEOTIDE SEQUENCE [LARGE SCALE GENOMIC DNA]</scope>
    <source>
        <strain>AX4</strain>
    </source>
</reference>
<feature type="chain" id="PRO_0000350876" description="Uncharacterized protein DDB_G0284161">
    <location>
        <begin position="1"/>
        <end position="103"/>
    </location>
</feature>
<feature type="region of interest" description="Disordered" evidence="1">
    <location>
        <begin position="38"/>
        <end position="70"/>
    </location>
</feature>
<feature type="compositionally biased region" description="Low complexity" evidence="1">
    <location>
        <begin position="38"/>
        <end position="51"/>
    </location>
</feature>
<feature type="compositionally biased region" description="Polar residues" evidence="1">
    <location>
        <begin position="52"/>
        <end position="70"/>
    </location>
</feature>
<organism>
    <name type="scientific">Dictyostelium discoideum</name>
    <name type="common">Social amoeba</name>
    <dbReference type="NCBI Taxonomy" id="44689"/>
    <lineage>
        <taxon>Eukaryota</taxon>
        <taxon>Amoebozoa</taxon>
        <taxon>Evosea</taxon>
        <taxon>Eumycetozoa</taxon>
        <taxon>Dictyostelia</taxon>
        <taxon>Dictyosteliales</taxon>
        <taxon>Dictyosteliaceae</taxon>
        <taxon>Dictyostelium</taxon>
    </lineage>
</organism>
<keyword id="KW-1185">Reference proteome</keyword>
<evidence type="ECO:0000256" key="1">
    <source>
        <dbReference type="SAM" id="MobiDB-lite"/>
    </source>
</evidence>
<accession>Q54Q38</accession>
<name>Y5379_DICDI</name>
<gene>
    <name type="ORF">DDB_G0284161</name>
</gene>
<protein>
    <recommendedName>
        <fullName>Uncharacterized protein DDB_G0284161</fullName>
    </recommendedName>
</protein>
<proteinExistence type="predicted"/>